<comment type="function">
    <text>Regulatory subunit of lactose synthase, changes the substrate specificity of galactosyltransferase in the mammary gland making glucose a good acceptor substrate for this enzyme. This enables LS to synthesize lactose, the major carbohydrate component of milk. In other tissues, galactosyltransferase transfers galactose onto the N-acetylglucosamine of the oligosaccharide chains in glycoproteins.</text>
</comment>
<comment type="subunit">
    <text>Lactose synthase (LS) is a heterodimer of a catalytic component, beta1,4-galactosyltransferase (beta4Gal-T1) and a regulatory component, alpha-lactalbumin (LA).</text>
</comment>
<comment type="subcellular location">
    <subcellularLocation>
        <location>Secreted</location>
    </subcellularLocation>
</comment>
<comment type="tissue specificity">
    <text>Mammary gland specific. Secreted in milk.</text>
</comment>
<comment type="similarity">
    <text evidence="2">Belongs to the glycosyl hydrolase 22 family.</text>
</comment>
<keyword id="KW-0106">Calcium</keyword>
<keyword id="KW-0903">Direct protein sequencing</keyword>
<keyword id="KW-1015">Disulfide bond</keyword>
<keyword id="KW-0325">Glycoprotein</keyword>
<keyword id="KW-0422">Lactose biosynthesis</keyword>
<keyword id="KW-0479">Metal-binding</keyword>
<keyword id="KW-0494">Milk protein</keyword>
<keyword id="KW-1185">Reference proteome</keyword>
<keyword id="KW-0964">Secreted</keyword>
<keyword id="KW-0732">Signal</keyword>
<proteinExistence type="evidence at protein level"/>
<evidence type="ECO:0000250" key="1">
    <source>
        <dbReference type="UniProtKB" id="P00711"/>
    </source>
</evidence>
<evidence type="ECO:0000255" key="2">
    <source>
        <dbReference type="PROSITE-ProRule" id="PRU00680"/>
    </source>
</evidence>
<evidence type="ECO:0000269" key="3">
    <source>
    </source>
</evidence>
<evidence type="ECO:0000305" key="4"/>
<dbReference type="EMBL" id="X00461">
    <property type="protein sequence ID" value="CAA25150.1"/>
    <property type="molecule type" value="Genomic_DNA"/>
</dbReference>
<dbReference type="EMBL" id="V01251">
    <property type="protein sequence ID" value="CAA24564.2"/>
    <property type="molecule type" value="mRNA"/>
</dbReference>
<dbReference type="PIR" id="A93327">
    <property type="entry name" value="LART"/>
</dbReference>
<dbReference type="RefSeq" id="NP_036726.1">
    <property type="nucleotide sequence ID" value="NM_012594.2"/>
</dbReference>
<dbReference type="SMR" id="P00714"/>
<dbReference type="FunCoup" id="P00714">
    <property type="interactions" value="29"/>
</dbReference>
<dbReference type="STRING" id="10116.ENSRNOP00000014457"/>
<dbReference type="GlyCosmos" id="P00714">
    <property type="glycosylation" value="1 site, No reported glycans"/>
</dbReference>
<dbReference type="GlyGen" id="P00714">
    <property type="glycosylation" value="1 site"/>
</dbReference>
<dbReference type="iPTMnet" id="P00714"/>
<dbReference type="PhosphoSitePlus" id="P00714"/>
<dbReference type="PaxDb" id="10116-ENSRNOP00000014457"/>
<dbReference type="GeneID" id="24528"/>
<dbReference type="KEGG" id="rno:24528"/>
<dbReference type="UCSC" id="RGD:2987">
    <property type="organism name" value="rat"/>
</dbReference>
<dbReference type="AGR" id="RGD:2987"/>
<dbReference type="CTD" id="3906"/>
<dbReference type="RGD" id="2987">
    <property type="gene designation" value="Lalba"/>
</dbReference>
<dbReference type="eggNOG" id="ENOG502T8BJ">
    <property type="taxonomic scope" value="Eukaryota"/>
</dbReference>
<dbReference type="InParanoid" id="P00714"/>
<dbReference type="OrthoDB" id="17373at2759"/>
<dbReference type="PhylomeDB" id="P00714"/>
<dbReference type="PRO" id="PR:P00714"/>
<dbReference type="Proteomes" id="UP000002494">
    <property type="component" value="Unplaced"/>
</dbReference>
<dbReference type="GO" id="GO:0005576">
    <property type="term" value="C:extracellular region"/>
    <property type="evidence" value="ECO:0007669"/>
    <property type="project" value="UniProtKB-SubCell"/>
</dbReference>
<dbReference type="GO" id="GO:0032991">
    <property type="term" value="C:protein-containing complex"/>
    <property type="evidence" value="ECO:0000266"/>
    <property type="project" value="RGD"/>
</dbReference>
<dbReference type="GO" id="GO:0005509">
    <property type="term" value="F:calcium ion binding"/>
    <property type="evidence" value="ECO:0007669"/>
    <property type="project" value="InterPro"/>
</dbReference>
<dbReference type="GO" id="GO:0004461">
    <property type="term" value="F:lactose synthase activity"/>
    <property type="evidence" value="ECO:0000266"/>
    <property type="project" value="RGD"/>
</dbReference>
<dbReference type="GO" id="GO:0003796">
    <property type="term" value="F:lysozyme activity"/>
    <property type="evidence" value="ECO:0000318"/>
    <property type="project" value="GO_Central"/>
</dbReference>
<dbReference type="GO" id="GO:0050829">
    <property type="term" value="P:defense response to Gram-negative bacterium"/>
    <property type="evidence" value="ECO:0000318"/>
    <property type="project" value="GO_Central"/>
</dbReference>
<dbReference type="GO" id="GO:0050830">
    <property type="term" value="P:defense response to Gram-positive bacterium"/>
    <property type="evidence" value="ECO:0000318"/>
    <property type="project" value="GO_Central"/>
</dbReference>
<dbReference type="GO" id="GO:0005989">
    <property type="term" value="P:lactose biosynthetic process"/>
    <property type="evidence" value="ECO:0000266"/>
    <property type="project" value="RGD"/>
</dbReference>
<dbReference type="CDD" id="cd16898">
    <property type="entry name" value="LYZ_LA"/>
    <property type="match status" value="1"/>
</dbReference>
<dbReference type="FunFam" id="1.10.530.10:FF:000014">
    <property type="entry name" value="Alpha-lactalbumin"/>
    <property type="match status" value="1"/>
</dbReference>
<dbReference type="Gene3D" id="1.10.530.10">
    <property type="match status" value="1"/>
</dbReference>
<dbReference type="InterPro" id="IPR001916">
    <property type="entry name" value="Glyco_hydro_22"/>
</dbReference>
<dbReference type="InterPro" id="IPR019799">
    <property type="entry name" value="Glyco_hydro_22_CS"/>
</dbReference>
<dbReference type="InterPro" id="IPR000545">
    <property type="entry name" value="Lactalbumin"/>
</dbReference>
<dbReference type="InterPro" id="IPR023346">
    <property type="entry name" value="Lysozyme-like_dom_sf"/>
</dbReference>
<dbReference type="PANTHER" id="PTHR11407:SF32">
    <property type="entry name" value="ALPHA-LACTALBUMIN"/>
    <property type="match status" value="1"/>
</dbReference>
<dbReference type="PANTHER" id="PTHR11407">
    <property type="entry name" value="LYSOZYME C"/>
    <property type="match status" value="1"/>
</dbReference>
<dbReference type="Pfam" id="PF00062">
    <property type="entry name" value="Lys"/>
    <property type="match status" value="1"/>
</dbReference>
<dbReference type="PRINTS" id="PR00136">
    <property type="entry name" value="LACTALBUMIN"/>
</dbReference>
<dbReference type="PRINTS" id="PR00135">
    <property type="entry name" value="LYZLACT"/>
</dbReference>
<dbReference type="SMART" id="SM00263">
    <property type="entry name" value="LYZ1"/>
    <property type="match status" value="1"/>
</dbReference>
<dbReference type="SUPFAM" id="SSF53955">
    <property type="entry name" value="Lysozyme-like"/>
    <property type="match status" value="1"/>
</dbReference>
<dbReference type="PROSITE" id="PS00128">
    <property type="entry name" value="GLYCOSYL_HYDROL_F22_1"/>
    <property type="match status" value="1"/>
</dbReference>
<dbReference type="PROSITE" id="PS51348">
    <property type="entry name" value="GLYCOSYL_HYDROL_F22_2"/>
    <property type="match status" value="1"/>
</dbReference>
<feature type="signal peptide" evidence="3">
    <location>
        <begin position="1"/>
        <end position="19"/>
    </location>
</feature>
<feature type="chain" id="PRO_0000018449" description="Alpha-lactalbumin" evidence="3">
    <location>
        <begin position="20"/>
        <end position="159"/>
    </location>
</feature>
<feature type="domain" description="C-type lysozyme" evidence="2">
    <location>
        <begin position="20"/>
        <end position="142"/>
    </location>
</feature>
<feature type="binding site" evidence="1">
    <location>
        <position position="98"/>
    </location>
    <ligand>
        <name>Ca(2+)</name>
        <dbReference type="ChEBI" id="CHEBI:29108"/>
    </ligand>
</feature>
<feature type="binding site" evidence="1">
    <location>
        <position position="101"/>
    </location>
    <ligand>
        <name>Ca(2+)</name>
        <dbReference type="ChEBI" id="CHEBI:29108"/>
    </ligand>
</feature>
<feature type="binding site" evidence="1">
    <location>
        <position position="106"/>
    </location>
    <ligand>
        <name>Ca(2+)</name>
        <dbReference type="ChEBI" id="CHEBI:29108"/>
    </ligand>
</feature>
<feature type="binding site" evidence="1">
    <location>
        <position position="107"/>
    </location>
    <ligand>
        <name>Ca(2+)</name>
        <dbReference type="ChEBI" id="CHEBI:29108"/>
    </ligand>
</feature>
<feature type="glycosylation site" description="N-linked (GlcNAc...) asparagine" evidence="3">
    <location>
        <position position="64"/>
    </location>
</feature>
<feature type="disulfide bond" evidence="2">
    <location>
        <begin position="25"/>
        <end position="139"/>
    </location>
</feature>
<feature type="disulfide bond" evidence="2">
    <location>
        <begin position="47"/>
        <end position="130"/>
    </location>
</feature>
<feature type="disulfide bond" evidence="2">
    <location>
        <begin position="80"/>
        <end position="96"/>
    </location>
</feature>
<feature type="disulfide bond" evidence="2">
    <location>
        <begin position="92"/>
        <end position="110"/>
    </location>
</feature>
<feature type="sequence conflict" description="In Ref. 3; AA sequence." evidence="4" ref="3">
    <original>QGI</original>
    <variation>EGV</variation>
    <location>
        <begin position="38"/>
        <end position="40"/>
    </location>
</feature>
<feature type="sequence conflict" description="In Ref. 3; AA sequence." evidence="4" ref="3">
    <original>L</original>
    <variation>P</variation>
    <location>
        <position position="43"/>
    </location>
</feature>
<feature type="sequence conflict" description="In Ref. 3; AA sequence." evidence="4" ref="3">
    <original>SQAI</original>
    <variation>TEAS</variation>
    <location>
        <begin position="57"/>
        <end position="60"/>
    </location>
</feature>
<feature type="sequence conflict" description="In Ref. 3; AA sequence." evidence="4" ref="3">
    <original>N</original>
    <variation>D</variation>
    <location>
        <position position="63"/>
    </location>
</feature>
<feature type="sequence conflict" description="In Ref. 3; AA sequence." evidence="4" ref="3">
    <original>N</original>
    <variation>D</variation>
    <location>
        <position position="78"/>
    </location>
</feature>
<feature type="sequence conflict" description="In Ref. 3; AA sequence." evidence="4" ref="3">
    <original>SSEFP</original>
    <variation>ENQFV</variation>
    <location>
        <begin position="82"/>
        <end position="86"/>
    </location>
</feature>
<feature type="sequence conflict" description="In Ref. 3; AA sequence." evidence="4" ref="3">
    <original>D</original>
    <variation>N</variation>
    <location>
        <position position="121"/>
    </location>
</feature>
<feature type="sequence conflict" description="In Ref. 3; AA sequence." evidence="4" ref="3">
    <original>K</original>
    <variation>L</variation>
    <location>
        <position position="124"/>
    </location>
</feature>
<feature type="sequence conflict" description="In Ref. 3; AA sequence." evidence="4" ref="3">
    <original>NS</original>
    <variation>DG</variation>
    <location>
        <begin position="153"/>
        <end position="154"/>
    </location>
</feature>
<accession>P00714</accession>
<accession>P00715</accession>
<sequence>MMRFVPLFLACISLPAFQATEFTKCEVSHAIEDMDGYQGISLLEWTCVLFHTSGYDSQAIVKNNGSTEYGLFQISNRNWCKSSEFPESENICDISCDKFLDDELADDIVCAKKIVAIKGIDYWKAHKPMCSEKLEQWRCEKPGAPALVVPALNSETPVP</sequence>
<name>LALBA_RAT</name>
<protein>
    <recommendedName>
        <fullName>Alpha-lactalbumin</fullName>
    </recommendedName>
    <alternativeName>
        <fullName>Lactose synthase B protein</fullName>
    </alternativeName>
</protein>
<reference key="1">
    <citation type="journal article" date="1984" name="Nature">
        <title>Similarity of the nucleotide sequences of rat alpha-lactalbumin and chicken lysozyme genes.</title>
        <authorList>
            <person name="Qasba P.K."/>
            <person name="Safaya S.K."/>
        </authorList>
    </citation>
    <scope>NUCLEOTIDE SEQUENCE [GENOMIC DNA]</scope>
</reference>
<reference key="2">
    <citation type="journal article" date="1981" name="Proc. Natl. Acad. Sci. U.S.A.">
        <title>Rat alpha-lactalbumin has a 17-residue-long COOH-terminal hydrophobic extension as judged by sequence analysis of the cDNA clones.</title>
        <authorList>
            <person name="Dandekar A.M."/>
            <person name="Qasba P.K."/>
        </authorList>
    </citation>
    <scope>NUCLEOTIDE SEQUENCE [MRNA] OF 44-159</scope>
</reference>
<reference key="3">
    <citation type="journal article" date="1982" name="Biochemistry">
        <title>Amino acid sequence of rat alpha-lactalbumin: a unique alpha-lactalbumin.</title>
        <authorList>
            <person name="Prasad R.V."/>
            <person name="Butkowski R.J."/>
            <person name="Hamilton J.W."/>
            <person name="Ebner K.E."/>
        </authorList>
    </citation>
    <scope>PROTEIN SEQUENCE OF 20-159</scope>
</reference>
<organism>
    <name type="scientific">Rattus norvegicus</name>
    <name type="common">Rat</name>
    <dbReference type="NCBI Taxonomy" id="10116"/>
    <lineage>
        <taxon>Eukaryota</taxon>
        <taxon>Metazoa</taxon>
        <taxon>Chordata</taxon>
        <taxon>Craniata</taxon>
        <taxon>Vertebrata</taxon>
        <taxon>Euteleostomi</taxon>
        <taxon>Mammalia</taxon>
        <taxon>Eutheria</taxon>
        <taxon>Euarchontoglires</taxon>
        <taxon>Glires</taxon>
        <taxon>Rodentia</taxon>
        <taxon>Myomorpha</taxon>
        <taxon>Muroidea</taxon>
        <taxon>Muridae</taxon>
        <taxon>Murinae</taxon>
        <taxon>Rattus</taxon>
    </lineage>
</organism>
<gene>
    <name type="primary">Lalba</name>
</gene>